<sequence>MAPAKEIWAVGRRKTSVARAKIKEGSGKITVNHKDIKDYLQNRKAIIEEAIRPLSLLNVQDKYDLNLNVTGGGTTGQVGAIRHALARAICRIKPEFRPAVKKEGFLTRDPRMVERKKYGLHKARRGTQFSKR</sequence>
<accession>Q8F0T3</accession>
<dbReference type="EMBL" id="AE010300">
    <property type="protein sequence ID" value="AAN50606.2"/>
    <property type="molecule type" value="Genomic_DNA"/>
</dbReference>
<dbReference type="RefSeq" id="NP_713588.2">
    <property type="nucleotide sequence ID" value="NC_004342.2"/>
</dbReference>
<dbReference type="RefSeq" id="WP_001966744.1">
    <property type="nucleotide sequence ID" value="NC_004342.2"/>
</dbReference>
<dbReference type="SMR" id="Q8F0T3"/>
<dbReference type="FunCoup" id="Q8F0T3">
    <property type="interactions" value="596"/>
</dbReference>
<dbReference type="STRING" id="189518.LA_3408"/>
<dbReference type="PaxDb" id="189518-LA_3408"/>
<dbReference type="EnsemblBacteria" id="AAN50606">
    <property type="protein sequence ID" value="AAN50606"/>
    <property type="gene ID" value="LA_3408"/>
</dbReference>
<dbReference type="GeneID" id="61144103"/>
<dbReference type="KEGG" id="lil:LA_3408"/>
<dbReference type="PATRIC" id="fig|189518.3.peg.3375"/>
<dbReference type="HOGENOM" id="CLU_046483_2_1_12"/>
<dbReference type="InParanoid" id="Q8F0T3"/>
<dbReference type="OrthoDB" id="9803965at2"/>
<dbReference type="Proteomes" id="UP000001408">
    <property type="component" value="Chromosome I"/>
</dbReference>
<dbReference type="GO" id="GO:0022627">
    <property type="term" value="C:cytosolic small ribosomal subunit"/>
    <property type="evidence" value="ECO:0000318"/>
    <property type="project" value="GO_Central"/>
</dbReference>
<dbReference type="GO" id="GO:0003723">
    <property type="term" value="F:RNA binding"/>
    <property type="evidence" value="ECO:0000318"/>
    <property type="project" value="GO_Central"/>
</dbReference>
<dbReference type="GO" id="GO:0003735">
    <property type="term" value="F:structural constituent of ribosome"/>
    <property type="evidence" value="ECO:0000318"/>
    <property type="project" value="GO_Central"/>
</dbReference>
<dbReference type="GO" id="GO:0006412">
    <property type="term" value="P:translation"/>
    <property type="evidence" value="ECO:0007669"/>
    <property type="project" value="UniProtKB-UniRule"/>
</dbReference>
<dbReference type="FunFam" id="3.30.230.10:FF:000001">
    <property type="entry name" value="30S ribosomal protein S9"/>
    <property type="match status" value="1"/>
</dbReference>
<dbReference type="Gene3D" id="3.30.230.10">
    <property type="match status" value="1"/>
</dbReference>
<dbReference type="HAMAP" id="MF_00532_B">
    <property type="entry name" value="Ribosomal_uS9_B"/>
    <property type="match status" value="1"/>
</dbReference>
<dbReference type="InterPro" id="IPR020568">
    <property type="entry name" value="Ribosomal_Su5_D2-typ_SF"/>
</dbReference>
<dbReference type="InterPro" id="IPR000754">
    <property type="entry name" value="Ribosomal_uS9"/>
</dbReference>
<dbReference type="InterPro" id="IPR023035">
    <property type="entry name" value="Ribosomal_uS9_bac/plastid"/>
</dbReference>
<dbReference type="InterPro" id="IPR020574">
    <property type="entry name" value="Ribosomal_uS9_CS"/>
</dbReference>
<dbReference type="InterPro" id="IPR014721">
    <property type="entry name" value="Ribsml_uS5_D2-typ_fold_subgr"/>
</dbReference>
<dbReference type="NCBIfam" id="NF001099">
    <property type="entry name" value="PRK00132.1"/>
    <property type="match status" value="1"/>
</dbReference>
<dbReference type="PANTHER" id="PTHR21569">
    <property type="entry name" value="RIBOSOMAL PROTEIN S9"/>
    <property type="match status" value="1"/>
</dbReference>
<dbReference type="PANTHER" id="PTHR21569:SF1">
    <property type="entry name" value="SMALL RIBOSOMAL SUBUNIT PROTEIN US9M"/>
    <property type="match status" value="1"/>
</dbReference>
<dbReference type="Pfam" id="PF00380">
    <property type="entry name" value="Ribosomal_S9"/>
    <property type="match status" value="1"/>
</dbReference>
<dbReference type="SUPFAM" id="SSF54211">
    <property type="entry name" value="Ribosomal protein S5 domain 2-like"/>
    <property type="match status" value="1"/>
</dbReference>
<dbReference type="PROSITE" id="PS00360">
    <property type="entry name" value="RIBOSOMAL_S9"/>
    <property type="match status" value="1"/>
</dbReference>
<protein>
    <recommendedName>
        <fullName evidence="1">Small ribosomal subunit protein uS9</fullName>
    </recommendedName>
    <alternativeName>
        <fullName evidence="2">30S ribosomal protein S9</fullName>
    </alternativeName>
</protein>
<evidence type="ECO:0000255" key="1">
    <source>
        <dbReference type="HAMAP-Rule" id="MF_00532"/>
    </source>
</evidence>
<evidence type="ECO:0000305" key="2"/>
<reference key="1">
    <citation type="journal article" date="2003" name="Nature">
        <title>Unique physiological and pathogenic features of Leptospira interrogans revealed by whole-genome sequencing.</title>
        <authorList>
            <person name="Ren S.-X."/>
            <person name="Fu G."/>
            <person name="Jiang X.-G."/>
            <person name="Zeng R."/>
            <person name="Miao Y.-G."/>
            <person name="Xu H."/>
            <person name="Zhang Y.-X."/>
            <person name="Xiong H."/>
            <person name="Lu G."/>
            <person name="Lu L.-F."/>
            <person name="Jiang H.-Q."/>
            <person name="Jia J."/>
            <person name="Tu Y.-F."/>
            <person name="Jiang J.-X."/>
            <person name="Gu W.-Y."/>
            <person name="Zhang Y.-Q."/>
            <person name="Cai Z."/>
            <person name="Sheng H.-H."/>
            <person name="Yin H.-F."/>
            <person name="Zhang Y."/>
            <person name="Zhu G.-F."/>
            <person name="Wan M."/>
            <person name="Huang H.-L."/>
            <person name="Qian Z."/>
            <person name="Wang S.-Y."/>
            <person name="Ma W."/>
            <person name="Yao Z.-J."/>
            <person name="Shen Y."/>
            <person name="Qiang B.-Q."/>
            <person name="Xia Q.-C."/>
            <person name="Guo X.-K."/>
            <person name="Danchin A."/>
            <person name="Saint Girons I."/>
            <person name="Somerville R.L."/>
            <person name="Wen Y.-M."/>
            <person name="Shi M.-H."/>
            <person name="Chen Z."/>
            <person name="Xu J.-G."/>
            <person name="Zhao G.-P."/>
        </authorList>
    </citation>
    <scope>NUCLEOTIDE SEQUENCE [LARGE SCALE GENOMIC DNA]</scope>
    <source>
        <strain>56601</strain>
    </source>
</reference>
<gene>
    <name evidence="1" type="primary">rpsI</name>
    <name type="ordered locus">LA_3408</name>
</gene>
<name>RS9_LEPIN</name>
<feature type="chain" id="PRO_0000111369" description="Small ribosomal subunit protein uS9">
    <location>
        <begin position="1"/>
        <end position="132"/>
    </location>
</feature>
<organism>
    <name type="scientific">Leptospira interrogans serogroup Icterohaemorrhagiae serovar Lai (strain 56601)</name>
    <dbReference type="NCBI Taxonomy" id="189518"/>
    <lineage>
        <taxon>Bacteria</taxon>
        <taxon>Pseudomonadati</taxon>
        <taxon>Spirochaetota</taxon>
        <taxon>Spirochaetia</taxon>
        <taxon>Leptospirales</taxon>
        <taxon>Leptospiraceae</taxon>
        <taxon>Leptospira</taxon>
    </lineage>
</organism>
<proteinExistence type="inferred from homology"/>
<comment type="similarity">
    <text evidence="1">Belongs to the universal ribosomal protein uS9 family.</text>
</comment>
<keyword id="KW-1185">Reference proteome</keyword>
<keyword id="KW-0687">Ribonucleoprotein</keyword>
<keyword id="KW-0689">Ribosomal protein</keyword>